<organism>
    <name type="scientific">Haemophilus influenzae (strain PittGG)</name>
    <dbReference type="NCBI Taxonomy" id="374931"/>
    <lineage>
        <taxon>Bacteria</taxon>
        <taxon>Pseudomonadati</taxon>
        <taxon>Pseudomonadota</taxon>
        <taxon>Gammaproteobacteria</taxon>
        <taxon>Pasteurellales</taxon>
        <taxon>Pasteurellaceae</taxon>
        <taxon>Haemophilus</taxon>
    </lineage>
</organism>
<name>HIS8_HAEIG</name>
<sequence>MTITTLSRQNIQALTPYQSARKLGGNGTIWLNANEYPTSPEFQLSGKDLNRYPEPQPQRVVQAYANYAGVSTENVLVTRGGDEGIELIIHTFCEPKQDAILFCPPTYGMYAVSAETAGVLSKTVPLTDDFQLNLPEIKNHLNDVKVVFVCSPNNPTGNLLKQSDILDLLQITAGKAIVVVDEAYIEFCPEASVINLLKNYPHLAIIRTLSKAFALAGLRCGFVLANPELIDILSKVIAPYPIPVPSADLAEQALRPANIATVQALTQELLSNRQWLAKALLVLHQVEKVYESEANYLLIKCQNGQAVFKALWEQGIILRDQNKTLHLQNCIRITVGTRNECEKVVEAIKEVK</sequence>
<accession>A5UGY2</accession>
<protein>
    <recommendedName>
        <fullName evidence="1">Histidinol-phosphate aminotransferase</fullName>
        <ecNumber evidence="1">2.6.1.9</ecNumber>
    </recommendedName>
    <alternativeName>
        <fullName evidence="1">Imidazole acetol-phosphate transaminase</fullName>
    </alternativeName>
</protein>
<keyword id="KW-0028">Amino-acid biosynthesis</keyword>
<keyword id="KW-0032">Aminotransferase</keyword>
<keyword id="KW-0368">Histidine biosynthesis</keyword>
<keyword id="KW-0663">Pyridoxal phosphate</keyword>
<keyword id="KW-0808">Transferase</keyword>
<proteinExistence type="inferred from homology"/>
<evidence type="ECO:0000255" key="1">
    <source>
        <dbReference type="HAMAP-Rule" id="MF_01023"/>
    </source>
</evidence>
<comment type="catalytic activity">
    <reaction evidence="1">
        <text>L-histidinol phosphate + 2-oxoglutarate = 3-(imidazol-4-yl)-2-oxopropyl phosphate + L-glutamate</text>
        <dbReference type="Rhea" id="RHEA:23744"/>
        <dbReference type="ChEBI" id="CHEBI:16810"/>
        <dbReference type="ChEBI" id="CHEBI:29985"/>
        <dbReference type="ChEBI" id="CHEBI:57766"/>
        <dbReference type="ChEBI" id="CHEBI:57980"/>
        <dbReference type="EC" id="2.6.1.9"/>
    </reaction>
</comment>
<comment type="cofactor">
    <cofactor evidence="1">
        <name>pyridoxal 5'-phosphate</name>
        <dbReference type="ChEBI" id="CHEBI:597326"/>
    </cofactor>
</comment>
<comment type="pathway">
    <text evidence="1">Amino-acid biosynthesis; L-histidine biosynthesis; L-histidine from 5-phospho-alpha-D-ribose 1-diphosphate: step 7/9.</text>
</comment>
<comment type="subunit">
    <text evidence="1">Homodimer.</text>
</comment>
<comment type="similarity">
    <text evidence="1">Belongs to the class-II pyridoxal-phosphate-dependent aminotransferase family. Histidinol-phosphate aminotransferase subfamily.</text>
</comment>
<reference key="1">
    <citation type="journal article" date="2007" name="Genome Biol.">
        <title>Characterization and modeling of the Haemophilus influenzae core and supragenomes based on the complete genomic sequences of Rd and 12 clinical nontypeable strains.</title>
        <authorList>
            <person name="Hogg J.S."/>
            <person name="Hu F.Z."/>
            <person name="Janto B."/>
            <person name="Boissy R."/>
            <person name="Hayes J."/>
            <person name="Keefe R."/>
            <person name="Post J.C."/>
            <person name="Ehrlich G.D."/>
        </authorList>
    </citation>
    <scope>NUCLEOTIDE SEQUENCE [LARGE SCALE GENOMIC DNA]</scope>
    <source>
        <strain>PittGG</strain>
    </source>
</reference>
<dbReference type="EC" id="2.6.1.9" evidence="1"/>
<dbReference type="EMBL" id="CP000672">
    <property type="protein sequence ID" value="ABR00038.1"/>
    <property type="molecule type" value="Genomic_DNA"/>
</dbReference>
<dbReference type="SMR" id="A5UGY2"/>
<dbReference type="KEGG" id="hiq:CGSHiGG_05595"/>
<dbReference type="HOGENOM" id="CLU_017584_3_1_6"/>
<dbReference type="UniPathway" id="UPA00031">
    <property type="reaction ID" value="UER00012"/>
</dbReference>
<dbReference type="Proteomes" id="UP000001990">
    <property type="component" value="Chromosome"/>
</dbReference>
<dbReference type="GO" id="GO:0004400">
    <property type="term" value="F:histidinol-phosphate transaminase activity"/>
    <property type="evidence" value="ECO:0007669"/>
    <property type="project" value="UniProtKB-UniRule"/>
</dbReference>
<dbReference type="GO" id="GO:0030170">
    <property type="term" value="F:pyridoxal phosphate binding"/>
    <property type="evidence" value="ECO:0007669"/>
    <property type="project" value="InterPro"/>
</dbReference>
<dbReference type="GO" id="GO:0000105">
    <property type="term" value="P:L-histidine biosynthetic process"/>
    <property type="evidence" value="ECO:0007669"/>
    <property type="project" value="UniProtKB-UniRule"/>
</dbReference>
<dbReference type="CDD" id="cd00609">
    <property type="entry name" value="AAT_like"/>
    <property type="match status" value="1"/>
</dbReference>
<dbReference type="Gene3D" id="3.90.1150.10">
    <property type="entry name" value="Aspartate Aminotransferase, domain 1"/>
    <property type="match status" value="1"/>
</dbReference>
<dbReference type="Gene3D" id="3.40.640.10">
    <property type="entry name" value="Type I PLP-dependent aspartate aminotransferase-like (Major domain)"/>
    <property type="match status" value="1"/>
</dbReference>
<dbReference type="HAMAP" id="MF_01023">
    <property type="entry name" value="HisC_aminotrans_2"/>
    <property type="match status" value="1"/>
</dbReference>
<dbReference type="InterPro" id="IPR001917">
    <property type="entry name" value="Aminotrans_II_pyridoxalP_BS"/>
</dbReference>
<dbReference type="InterPro" id="IPR004839">
    <property type="entry name" value="Aminotransferase_I/II_large"/>
</dbReference>
<dbReference type="InterPro" id="IPR005861">
    <property type="entry name" value="HisP_aminotrans"/>
</dbReference>
<dbReference type="InterPro" id="IPR015424">
    <property type="entry name" value="PyrdxlP-dep_Trfase"/>
</dbReference>
<dbReference type="InterPro" id="IPR015421">
    <property type="entry name" value="PyrdxlP-dep_Trfase_major"/>
</dbReference>
<dbReference type="InterPro" id="IPR015422">
    <property type="entry name" value="PyrdxlP-dep_Trfase_small"/>
</dbReference>
<dbReference type="NCBIfam" id="TIGR01141">
    <property type="entry name" value="hisC"/>
    <property type="match status" value="1"/>
</dbReference>
<dbReference type="PANTHER" id="PTHR42885:SF2">
    <property type="entry name" value="HISTIDINOL-PHOSPHATE AMINOTRANSFERASE"/>
    <property type="match status" value="1"/>
</dbReference>
<dbReference type="PANTHER" id="PTHR42885">
    <property type="entry name" value="HISTIDINOL-PHOSPHATE AMINOTRANSFERASE-RELATED"/>
    <property type="match status" value="1"/>
</dbReference>
<dbReference type="Pfam" id="PF00155">
    <property type="entry name" value="Aminotran_1_2"/>
    <property type="match status" value="1"/>
</dbReference>
<dbReference type="SUPFAM" id="SSF53383">
    <property type="entry name" value="PLP-dependent transferases"/>
    <property type="match status" value="1"/>
</dbReference>
<dbReference type="PROSITE" id="PS00599">
    <property type="entry name" value="AA_TRANSFER_CLASS_2"/>
    <property type="match status" value="1"/>
</dbReference>
<feature type="chain" id="PRO_1000063480" description="Histidinol-phosphate aminotransferase">
    <location>
        <begin position="1"/>
        <end position="352"/>
    </location>
</feature>
<feature type="modified residue" description="N6-(pyridoxal phosphate)lysine" evidence="1">
    <location>
        <position position="211"/>
    </location>
</feature>
<gene>
    <name evidence="1" type="primary">hisC</name>
    <name type="ordered locus">CGSHiGG_05595</name>
</gene>